<dbReference type="EMBL" id="AK020723">
    <property type="protein sequence ID" value="BAB32189.1"/>
    <property type="molecule type" value="mRNA"/>
</dbReference>
<dbReference type="EMBL" id="AK138363">
    <property type="protein sequence ID" value="BAE23633.1"/>
    <property type="molecule type" value="mRNA"/>
</dbReference>
<dbReference type="EMBL" id="AC139754">
    <property type="status" value="NOT_ANNOTATED_CDS"/>
    <property type="molecule type" value="Genomic_DNA"/>
</dbReference>
<dbReference type="EMBL" id="CH466539">
    <property type="protein sequence ID" value="EDL21464.1"/>
    <property type="molecule type" value="Genomic_DNA"/>
</dbReference>
<dbReference type="CCDS" id="CCDS24105.1"/>
<dbReference type="RefSeq" id="NP_084247.1">
    <property type="nucleotide sequence ID" value="NM_029971.2"/>
</dbReference>
<dbReference type="BioGRID" id="225486">
    <property type="interactions" value="4"/>
</dbReference>
<dbReference type="FunCoup" id="P56942">
    <property type="interactions" value="812"/>
</dbReference>
<dbReference type="IntAct" id="P56942">
    <property type="interactions" value="3"/>
</dbReference>
<dbReference type="MINT" id="P56942"/>
<dbReference type="STRING" id="10090.ENSMUSP00000044352"/>
<dbReference type="PaxDb" id="10090-ENSMUSP00000044352"/>
<dbReference type="ProteomicsDB" id="252746"/>
<dbReference type="Antibodypedia" id="18038">
    <property type="antibodies" value="151 antibodies from 25 providers"/>
</dbReference>
<dbReference type="DNASU" id="110312"/>
<dbReference type="Ensembl" id="ENSMUST00000048621.8">
    <property type="protein sequence ID" value="ENSMUSP00000044352.8"/>
    <property type="gene ID" value="ENSMUSG00000035383.8"/>
</dbReference>
<dbReference type="GeneID" id="110312"/>
<dbReference type="KEGG" id="mmu:110312"/>
<dbReference type="UCSC" id="uc007grc.1">
    <property type="organism name" value="mouse"/>
</dbReference>
<dbReference type="AGR" id="MGI:97629"/>
<dbReference type="CTD" id="5367"/>
<dbReference type="MGI" id="MGI:97629">
    <property type="gene designation" value="Pmch"/>
</dbReference>
<dbReference type="VEuPathDB" id="HostDB:ENSMUSG00000035383"/>
<dbReference type="eggNOG" id="ENOG502RZ12">
    <property type="taxonomic scope" value="Eukaryota"/>
</dbReference>
<dbReference type="GeneTree" id="ENSGT00390000004984"/>
<dbReference type="HOGENOM" id="CLU_1610172_0_0_1"/>
<dbReference type="InParanoid" id="P56942"/>
<dbReference type="OMA" id="NTFRMGK"/>
<dbReference type="OrthoDB" id="28862at9989"/>
<dbReference type="TreeFam" id="TF330944"/>
<dbReference type="Reactome" id="R-MMU-375276">
    <property type="pathway name" value="Peptide ligand-binding receptors"/>
</dbReference>
<dbReference type="Reactome" id="R-MMU-416476">
    <property type="pathway name" value="G alpha (q) signalling events"/>
</dbReference>
<dbReference type="Reactome" id="R-MMU-418594">
    <property type="pathway name" value="G alpha (i) signalling events"/>
</dbReference>
<dbReference type="BioGRID-ORCS" id="110312">
    <property type="hits" value="2 hits in 77 CRISPR screens"/>
</dbReference>
<dbReference type="ChiTaRS" id="Pmch">
    <property type="organism name" value="mouse"/>
</dbReference>
<dbReference type="PRO" id="PR:P56942"/>
<dbReference type="Proteomes" id="UP000000589">
    <property type="component" value="Chromosome 10"/>
</dbReference>
<dbReference type="RNAct" id="P56942">
    <property type="molecule type" value="protein"/>
</dbReference>
<dbReference type="Bgee" id="ENSMUSG00000035383">
    <property type="expression patterns" value="Expressed in dorsomedial nucleus of hypothalamus and 61 other cell types or tissues"/>
</dbReference>
<dbReference type="GO" id="GO:0005576">
    <property type="term" value="C:extracellular region"/>
    <property type="evidence" value="ECO:0007669"/>
    <property type="project" value="UniProtKB-SubCell"/>
</dbReference>
<dbReference type="GO" id="GO:0005634">
    <property type="term" value="C:nucleus"/>
    <property type="evidence" value="ECO:0000314"/>
    <property type="project" value="MGI"/>
</dbReference>
<dbReference type="GO" id="GO:0045202">
    <property type="term" value="C:synapse"/>
    <property type="evidence" value="ECO:0007669"/>
    <property type="project" value="GOC"/>
</dbReference>
<dbReference type="GO" id="GO:0030354">
    <property type="term" value="F:melanin-concentrating hormone activity"/>
    <property type="evidence" value="ECO:0000303"/>
    <property type="project" value="UniProtKB"/>
</dbReference>
<dbReference type="GO" id="GO:0005102">
    <property type="term" value="F:signaling receptor binding"/>
    <property type="evidence" value="ECO:0000303"/>
    <property type="project" value="UniProtKB"/>
</dbReference>
<dbReference type="GO" id="GO:0007268">
    <property type="term" value="P:chemical synaptic transmission"/>
    <property type="evidence" value="ECO:0007669"/>
    <property type="project" value="InterPro"/>
</dbReference>
<dbReference type="GO" id="GO:0007631">
    <property type="term" value="P:feeding behavior"/>
    <property type="evidence" value="ECO:0000315"/>
    <property type="project" value="UniProtKB"/>
</dbReference>
<dbReference type="GO" id="GO:0007218">
    <property type="term" value="P:neuropeptide signaling pathway"/>
    <property type="evidence" value="ECO:0007669"/>
    <property type="project" value="UniProtKB-KW"/>
</dbReference>
<dbReference type="InterPro" id="IPR005456">
    <property type="entry name" value="Prepro-melanin_conc_hormone"/>
</dbReference>
<dbReference type="PANTHER" id="PTHR12091">
    <property type="entry name" value="MELANIN-CONCENTRATING HORMONE"/>
    <property type="match status" value="1"/>
</dbReference>
<dbReference type="PANTHER" id="PTHR12091:SF0">
    <property type="entry name" value="PRO-MCH"/>
    <property type="match status" value="1"/>
</dbReference>
<dbReference type="Pfam" id="PF05824">
    <property type="entry name" value="Pro-MCH"/>
    <property type="match status" value="1"/>
</dbReference>
<dbReference type="PRINTS" id="PR01641">
    <property type="entry name" value="PROMCHFAMILY"/>
</dbReference>
<protein>
    <recommendedName>
        <fullName>Pro-MCH</fullName>
    </recommendedName>
    <component>
        <recommendedName>
            <fullName>Neuropeptide-glycine-glutamic acid</fullName>
            <shortName>NGE</shortName>
            <shortName>Neuropeptide G-E</shortName>
        </recommendedName>
    </component>
    <component>
        <recommendedName>
            <fullName>Neuropeptide-glutamic acid-isoleucine</fullName>
            <shortName>NEI</shortName>
            <shortName>Neuropeptide E-I</shortName>
        </recommendedName>
    </component>
    <component>
        <recommendedName>
            <fullName>Melanin-concentrating hormone</fullName>
            <shortName>MCH</shortName>
        </recommendedName>
    </component>
</protein>
<comment type="function">
    <text evidence="5">MCH may act as a neurotransmitter or neuromodulator in a broad array of neuronal functions directed toward the regulation of goal-directed behavior, such as food intake, and general arousal.</text>
</comment>
<comment type="subcellular location">
    <subcellularLocation>
        <location evidence="1">Secreted</location>
    </subcellularLocation>
</comment>
<comment type="tissue specificity">
    <text evidence="6">Predominantly expressed in hypothalamus. Also found in heart, intestine, spleen and testis (spermatogonia, early spermatocytes and Sertoli cells). In brain only mature MCH and NEI peptides are present. In peripheral tissues a large product, encompassing the NEI and MCH domains of the precursor, is found predominantly.</text>
</comment>
<comment type="developmental stage">
    <text>Expression is enhanced between postnatal days 10 and 15.</text>
</comment>
<comment type="PTM">
    <text evidence="4">Pro-MCH is processed differentially in the brain and in peripheral organs producing two neuropeptides; NEI and MCH. A third peptide, NGE, may also be produced. Preferential processing in neurons by prohormone convertase 2 (PC2) generates NEI. MCH is generated in neurons of the lateral hypothalmic area by several prohormone convertases including PC1/3, PC2 and PC5/6.</text>
</comment>
<comment type="similarity">
    <text evidence="7">Belongs to the MCH family.</text>
</comment>
<organism>
    <name type="scientific">Mus musculus</name>
    <name type="common">Mouse</name>
    <dbReference type="NCBI Taxonomy" id="10090"/>
    <lineage>
        <taxon>Eukaryota</taxon>
        <taxon>Metazoa</taxon>
        <taxon>Chordata</taxon>
        <taxon>Craniata</taxon>
        <taxon>Vertebrata</taxon>
        <taxon>Euteleostomi</taxon>
        <taxon>Mammalia</taxon>
        <taxon>Eutheria</taxon>
        <taxon>Euarchontoglires</taxon>
        <taxon>Glires</taxon>
        <taxon>Rodentia</taxon>
        <taxon>Myomorpha</taxon>
        <taxon>Muroidea</taxon>
        <taxon>Muridae</taxon>
        <taxon>Murinae</taxon>
        <taxon>Mus</taxon>
        <taxon>Mus</taxon>
    </lineage>
</organism>
<evidence type="ECO:0000250" key="1"/>
<evidence type="ECO:0000255" key="2"/>
<evidence type="ECO:0000256" key="3">
    <source>
        <dbReference type="SAM" id="MobiDB-lite"/>
    </source>
</evidence>
<evidence type="ECO:0000269" key="4">
    <source>
    </source>
</evidence>
<evidence type="ECO:0000269" key="5">
    <source>
    </source>
</evidence>
<evidence type="ECO:0000269" key="6">
    <source>
    </source>
</evidence>
<evidence type="ECO:0000305" key="7"/>
<proteinExistence type="evidence at protein level"/>
<accession>P56942</accession>
<accession>Q9D220</accession>
<sequence>MAKMTLSSYMLMLAFSLFSQGILLSASKSIRNLEDDIVFNTFRMGKAFQKEDTAERSVVAPSLEQYKNDESGFMNDDDNKNSKNTGSKQNLVTHGLPLSLAVKPYLALKGSVAFPAENGVQNAESTQEKREIGDEENSAKFPIGRRDFDMLRCMLGRVYRPCWQV</sequence>
<feature type="signal peptide" evidence="2">
    <location>
        <begin position="1"/>
        <end position="21"/>
    </location>
</feature>
<feature type="chain" id="PRO_0000019112" description="Pro-MCH">
    <location>
        <begin position="22"/>
        <end position="165"/>
    </location>
</feature>
<feature type="peptide" id="PRO_0000019113" description="Neuropeptide-glycine-glutamic acid" evidence="2">
    <location>
        <begin position="110"/>
        <end position="128"/>
    </location>
</feature>
<feature type="peptide" id="PRO_0000019114" description="Neuropeptide-glutamic acid-isoleucine" evidence="1">
    <location>
        <begin position="131"/>
        <end position="143"/>
    </location>
</feature>
<feature type="peptide" id="PRO_0000019115" description="Melanin-concentrating hormone">
    <location>
        <begin position="147"/>
        <end position="165"/>
    </location>
</feature>
<feature type="region of interest" description="Disordered" evidence="3">
    <location>
        <begin position="66"/>
        <end position="89"/>
    </location>
</feature>
<feature type="modified residue" description="Isoleucine amide" evidence="1">
    <location>
        <position position="143"/>
    </location>
</feature>
<feature type="disulfide bond" evidence="1">
    <location>
        <begin position="153"/>
        <end position="162"/>
    </location>
</feature>
<feature type="sequence conflict" description="In Ref. 1; no nucleotide entry." evidence="7" ref="1">
    <original>A</original>
    <variation>AV</variation>
    <location>
        <position position="113"/>
    </location>
</feature>
<feature type="sequence conflict" description="In Ref. 1; no nucleotide entry." evidence="7" ref="1">
    <original>A</original>
    <variation>T</variation>
    <location>
        <position position="123"/>
    </location>
</feature>
<gene>
    <name type="primary">Pmch</name>
    <name type="synonym">Mch</name>
</gene>
<keyword id="KW-0027">Amidation</keyword>
<keyword id="KW-0165">Cleavage on pair of basic residues</keyword>
<keyword id="KW-1015">Disulfide bond</keyword>
<keyword id="KW-0372">Hormone</keyword>
<keyword id="KW-0527">Neuropeptide</keyword>
<keyword id="KW-1185">Reference proteome</keyword>
<keyword id="KW-0964">Secreted</keyword>
<keyword id="KW-0732">Signal</keyword>
<reference key="1">
    <citation type="journal article" date="1993" name="Mol. Cell. Neurosci.">
        <title>Structure and regulation of the mouse melanin-concentrating hormone mRNA and gene.</title>
        <authorList>
            <person name="Breton C."/>
            <person name="Presse F."/>
            <person name="Hervieu G."/>
            <person name="Nahon J.-L."/>
        </authorList>
    </citation>
    <scope>NUCLEOTIDE SEQUENCE [MRNA]</scope>
    <source>
        <strain>BALB/cJ</strain>
        <tissue>Brain</tissue>
    </source>
</reference>
<reference key="2">
    <citation type="journal article" date="2005" name="Science">
        <title>The transcriptional landscape of the mammalian genome.</title>
        <authorList>
            <person name="Carninci P."/>
            <person name="Kasukawa T."/>
            <person name="Katayama S."/>
            <person name="Gough J."/>
            <person name="Frith M.C."/>
            <person name="Maeda N."/>
            <person name="Oyama R."/>
            <person name="Ravasi T."/>
            <person name="Lenhard B."/>
            <person name="Wells C."/>
            <person name="Kodzius R."/>
            <person name="Shimokawa K."/>
            <person name="Bajic V.B."/>
            <person name="Brenner S.E."/>
            <person name="Batalov S."/>
            <person name="Forrest A.R."/>
            <person name="Zavolan M."/>
            <person name="Davis M.J."/>
            <person name="Wilming L.G."/>
            <person name="Aidinis V."/>
            <person name="Allen J.E."/>
            <person name="Ambesi-Impiombato A."/>
            <person name="Apweiler R."/>
            <person name="Aturaliya R.N."/>
            <person name="Bailey T.L."/>
            <person name="Bansal M."/>
            <person name="Baxter L."/>
            <person name="Beisel K.W."/>
            <person name="Bersano T."/>
            <person name="Bono H."/>
            <person name="Chalk A.M."/>
            <person name="Chiu K.P."/>
            <person name="Choudhary V."/>
            <person name="Christoffels A."/>
            <person name="Clutterbuck D.R."/>
            <person name="Crowe M.L."/>
            <person name="Dalla E."/>
            <person name="Dalrymple B.P."/>
            <person name="de Bono B."/>
            <person name="Della Gatta G."/>
            <person name="di Bernardo D."/>
            <person name="Down T."/>
            <person name="Engstrom P."/>
            <person name="Fagiolini M."/>
            <person name="Faulkner G."/>
            <person name="Fletcher C.F."/>
            <person name="Fukushima T."/>
            <person name="Furuno M."/>
            <person name="Futaki S."/>
            <person name="Gariboldi M."/>
            <person name="Georgii-Hemming P."/>
            <person name="Gingeras T.R."/>
            <person name="Gojobori T."/>
            <person name="Green R.E."/>
            <person name="Gustincich S."/>
            <person name="Harbers M."/>
            <person name="Hayashi Y."/>
            <person name="Hensch T.K."/>
            <person name="Hirokawa N."/>
            <person name="Hill D."/>
            <person name="Huminiecki L."/>
            <person name="Iacono M."/>
            <person name="Ikeo K."/>
            <person name="Iwama A."/>
            <person name="Ishikawa T."/>
            <person name="Jakt M."/>
            <person name="Kanapin A."/>
            <person name="Katoh M."/>
            <person name="Kawasawa Y."/>
            <person name="Kelso J."/>
            <person name="Kitamura H."/>
            <person name="Kitano H."/>
            <person name="Kollias G."/>
            <person name="Krishnan S.P."/>
            <person name="Kruger A."/>
            <person name="Kummerfeld S.K."/>
            <person name="Kurochkin I.V."/>
            <person name="Lareau L.F."/>
            <person name="Lazarevic D."/>
            <person name="Lipovich L."/>
            <person name="Liu J."/>
            <person name="Liuni S."/>
            <person name="McWilliam S."/>
            <person name="Madan Babu M."/>
            <person name="Madera M."/>
            <person name="Marchionni L."/>
            <person name="Matsuda H."/>
            <person name="Matsuzawa S."/>
            <person name="Miki H."/>
            <person name="Mignone F."/>
            <person name="Miyake S."/>
            <person name="Morris K."/>
            <person name="Mottagui-Tabar S."/>
            <person name="Mulder N."/>
            <person name="Nakano N."/>
            <person name="Nakauchi H."/>
            <person name="Ng P."/>
            <person name="Nilsson R."/>
            <person name="Nishiguchi S."/>
            <person name="Nishikawa S."/>
            <person name="Nori F."/>
            <person name="Ohara O."/>
            <person name="Okazaki Y."/>
            <person name="Orlando V."/>
            <person name="Pang K.C."/>
            <person name="Pavan W.J."/>
            <person name="Pavesi G."/>
            <person name="Pesole G."/>
            <person name="Petrovsky N."/>
            <person name="Piazza S."/>
            <person name="Reed J."/>
            <person name="Reid J.F."/>
            <person name="Ring B.Z."/>
            <person name="Ringwald M."/>
            <person name="Rost B."/>
            <person name="Ruan Y."/>
            <person name="Salzberg S.L."/>
            <person name="Sandelin A."/>
            <person name="Schneider C."/>
            <person name="Schoenbach C."/>
            <person name="Sekiguchi K."/>
            <person name="Semple C.A."/>
            <person name="Seno S."/>
            <person name="Sessa L."/>
            <person name="Sheng Y."/>
            <person name="Shibata Y."/>
            <person name="Shimada H."/>
            <person name="Shimada K."/>
            <person name="Silva D."/>
            <person name="Sinclair B."/>
            <person name="Sperling S."/>
            <person name="Stupka E."/>
            <person name="Sugiura K."/>
            <person name="Sultana R."/>
            <person name="Takenaka Y."/>
            <person name="Taki K."/>
            <person name="Tammoja K."/>
            <person name="Tan S.L."/>
            <person name="Tang S."/>
            <person name="Taylor M.S."/>
            <person name="Tegner J."/>
            <person name="Teichmann S.A."/>
            <person name="Ueda H.R."/>
            <person name="van Nimwegen E."/>
            <person name="Verardo R."/>
            <person name="Wei C.L."/>
            <person name="Yagi K."/>
            <person name="Yamanishi H."/>
            <person name="Zabarovsky E."/>
            <person name="Zhu S."/>
            <person name="Zimmer A."/>
            <person name="Hide W."/>
            <person name="Bult C."/>
            <person name="Grimmond S.M."/>
            <person name="Teasdale R.D."/>
            <person name="Liu E.T."/>
            <person name="Brusic V."/>
            <person name="Quackenbush J."/>
            <person name="Wahlestedt C."/>
            <person name="Mattick J.S."/>
            <person name="Hume D.A."/>
            <person name="Kai C."/>
            <person name="Sasaki D."/>
            <person name="Tomaru Y."/>
            <person name="Fukuda S."/>
            <person name="Kanamori-Katayama M."/>
            <person name="Suzuki M."/>
            <person name="Aoki J."/>
            <person name="Arakawa T."/>
            <person name="Iida J."/>
            <person name="Imamura K."/>
            <person name="Itoh M."/>
            <person name="Kato T."/>
            <person name="Kawaji H."/>
            <person name="Kawagashira N."/>
            <person name="Kawashima T."/>
            <person name="Kojima M."/>
            <person name="Kondo S."/>
            <person name="Konno H."/>
            <person name="Nakano K."/>
            <person name="Ninomiya N."/>
            <person name="Nishio T."/>
            <person name="Okada M."/>
            <person name="Plessy C."/>
            <person name="Shibata K."/>
            <person name="Shiraki T."/>
            <person name="Suzuki S."/>
            <person name="Tagami M."/>
            <person name="Waki K."/>
            <person name="Watahiki A."/>
            <person name="Okamura-Oho Y."/>
            <person name="Suzuki H."/>
            <person name="Kawai J."/>
            <person name="Hayashizaki Y."/>
        </authorList>
    </citation>
    <scope>NUCLEOTIDE SEQUENCE [LARGE SCALE MRNA]</scope>
    <source>
        <strain>C57BL/6J</strain>
        <tissue>Hypothalamus</tissue>
    </source>
</reference>
<reference key="3">
    <citation type="journal article" date="2009" name="PLoS Biol.">
        <title>Lineage-specific biology revealed by a finished genome assembly of the mouse.</title>
        <authorList>
            <person name="Church D.M."/>
            <person name="Goodstadt L."/>
            <person name="Hillier L.W."/>
            <person name="Zody M.C."/>
            <person name="Goldstein S."/>
            <person name="She X."/>
            <person name="Bult C.J."/>
            <person name="Agarwala R."/>
            <person name="Cherry J.L."/>
            <person name="DiCuccio M."/>
            <person name="Hlavina W."/>
            <person name="Kapustin Y."/>
            <person name="Meric P."/>
            <person name="Maglott D."/>
            <person name="Birtle Z."/>
            <person name="Marques A.C."/>
            <person name="Graves T."/>
            <person name="Zhou S."/>
            <person name="Teague B."/>
            <person name="Potamousis K."/>
            <person name="Churas C."/>
            <person name="Place M."/>
            <person name="Herschleb J."/>
            <person name="Runnheim R."/>
            <person name="Forrest D."/>
            <person name="Amos-Landgraf J."/>
            <person name="Schwartz D.C."/>
            <person name="Cheng Z."/>
            <person name="Lindblad-Toh K."/>
            <person name="Eichler E.E."/>
            <person name="Ponting C.P."/>
        </authorList>
    </citation>
    <scope>NUCLEOTIDE SEQUENCE [LARGE SCALE GENOMIC DNA]</scope>
    <source>
        <strain>C57BL/6J</strain>
    </source>
</reference>
<reference key="4">
    <citation type="submission" date="2005-07" db="EMBL/GenBank/DDBJ databases">
        <authorList>
            <person name="Mural R.J."/>
            <person name="Adams M.D."/>
            <person name="Myers E.W."/>
            <person name="Smith H.O."/>
            <person name="Venter J.C."/>
        </authorList>
    </citation>
    <scope>NUCLEOTIDE SEQUENCE [LARGE SCALE GENOMIC DNA]</scope>
</reference>
<reference key="5">
    <citation type="journal article" date="1996" name="Biol. Reprod.">
        <title>Developmental and stage-dependent expression of melanin-concentrating hormone in mammalian germ cells.</title>
        <authorList>
            <person name="Hervieu G."/>
            <person name="Segretain D."/>
            <person name="Nahon J.-L."/>
        </authorList>
    </citation>
    <scope>TISSUE SPECIFICITY</scope>
</reference>
<reference key="6">
    <citation type="journal article" date="1996" name="Nature">
        <title>A role for melanin-concentrating hormone in the central regulation of feeding behaviour.</title>
        <authorList>
            <person name="Qu D."/>
            <person name="Ludwig D.S."/>
            <person name="Gammeltoft S."/>
            <person name="Piper M."/>
            <person name="Pelleymounter M.A."/>
            <person name="Cullen M.J."/>
            <person name="Mathes W.F."/>
            <person name="Przypek R."/>
            <person name="Kanarek R."/>
            <person name="Maratos-Flier E."/>
        </authorList>
    </citation>
    <scope>FUNCTION</scope>
</reference>
<reference key="7">
    <citation type="journal article" date="1999" name="J. Biol. Chem.">
        <title>Cellular localization and role of prohormone convertases in the processing of pro-melanin concentrating hormone in mammals.</title>
        <authorList>
            <person name="Viale A."/>
            <person name="Ortola C."/>
            <person name="Hervieu G."/>
            <person name="Furuta M."/>
            <person name="Barbero P."/>
            <person name="Steiner D.F."/>
            <person name="Seidah N.G."/>
            <person name="Nahon J.-L."/>
        </authorList>
    </citation>
    <scope>PROTEOLYTIC PROCESSING</scope>
</reference>
<name>MCH_MOUSE</name>